<evidence type="ECO:0000255" key="1"/>
<evidence type="ECO:0000255" key="2">
    <source>
        <dbReference type="PROSITE-ProRule" id="PRU00274"/>
    </source>
</evidence>
<evidence type="ECO:0000269" key="3">
    <source>
    </source>
</evidence>
<evidence type="ECO:0000269" key="4">
    <source>
    </source>
</evidence>
<evidence type="ECO:0000269" key="5">
    <source>
    </source>
</evidence>
<evidence type="ECO:0000269" key="6">
    <source>
    </source>
</evidence>
<evidence type="ECO:0000269" key="7">
    <source>
    </source>
</evidence>
<evidence type="ECO:0000269" key="8">
    <source>
    </source>
</evidence>
<evidence type="ECO:0000269" key="9">
    <source>
    </source>
</evidence>
<evidence type="ECO:0000269" key="10">
    <source>
    </source>
</evidence>
<evidence type="ECO:0000269" key="11">
    <source>
    </source>
</evidence>
<evidence type="ECO:0000269" key="12">
    <source>
    </source>
</evidence>
<evidence type="ECO:0000269" key="13">
    <source>
    </source>
</evidence>
<evidence type="ECO:0000269" key="14">
    <source>
    </source>
</evidence>
<evidence type="ECO:0000269" key="15">
    <source>
    </source>
</evidence>
<evidence type="ECO:0000269" key="16">
    <source>
    </source>
</evidence>
<evidence type="ECO:0000269" key="17">
    <source>
    </source>
</evidence>
<evidence type="ECO:0000269" key="18">
    <source>
    </source>
</evidence>
<evidence type="ECO:0000269" key="19">
    <source>
    </source>
</evidence>
<evidence type="ECO:0000269" key="20">
    <source>
    </source>
</evidence>
<evidence type="ECO:0000269" key="21">
    <source>
    </source>
</evidence>
<evidence type="ECO:0000269" key="22">
    <source>
    </source>
</evidence>
<evidence type="ECO:0000269" key="23">
    <source>
    </source>
</evidence>
<evidence type="ECO:0000269" key="24">
    <source>
    </source>
</evidence>
<evidence type="ECO:0000269" key="25">
    <source>
    </source>
</evidence>
<evidence type="ECO:0000269" key="26">
    <source>
    </source>
</evidence>
<evidence type="ECO:0000269" key="27">
    <source>
    </source>
</evidence>
<evidence type="ECO:0000269" key="28">
    <source>
    </source>
</evidence>
<evidence type="ECO:0000269" key="29">
    <source>
    </source>
</evidence>
<evidence type="ECO:0000269" key="30">
    <source ref="5"/>
</evidence>
<evidence type="ECO:0000305" key="31"/>
<evidence type="ECO:0007829" key="32">
    <source>
        <dbReference type="PDB" id="2Z7F"/>
    </source>
</evidence>
<evidence type="ECO:0007829" key="33">
    <source>
        <dbReference type="PDB" id="4WVP"/>
    </source>
</evidence>
<evidence type="ECO:0007829" key="34">
    <source>
        <dbReference type="PDB" id="5ABW"/>
    </source>
</evidence>
<evidence type="ECO:0007829" key="35">
    <source>
        <dbReference type="PDB" id="9ATK"/>
    </source>
</evidence>
<gene>
    <name type="primary">ELANE</name>
    <name type="synonym">ELA2</name>
</gene>
<dbReference type="EC" id="3.4.21.37" evidence="27"/>
<dbReference type="EMBL" id="Y00477">
    <property type="protein sequence ID" value="CAA68537.1"/>
    <property type="molecule type" value="Genomic_DNA"/>
</dbReference>
<dbReference type="EMBL" id="M20203">
    <property type="protein sequence ID" value="AAA36359.1"/>
    <property type="molecule type" value="Genomic_DNA"/>
</dbReference>
<dbReference type="EMBL" id="M20199">
    <property type="protein sequence ID" value="AAA36359.1"/>
    <property type="status" value="JOINED"/>
    <property type="molecule type" value="Genomic_DNA"/>
</dbReference>
<dbReference type="EMBL" id="M20200">
    <property type="protein sequence ID" value="AAA36359.1"/>
    <property type="status" value="JOINED"/>
    <property type="molecule type" value="Genomic_DNA"/>
</dbReference>
<dbReference type="EMBL" id="M20201">
    <property type="protein sequence ID" value="AAA36359.1"/>
    <property type="status" value="JOINED"/>
    <property type="molecule type" value="Genomic_DNA"/>
</dbReference>
<dbReference type="EMBL" id="M34379">
    <property type="protein sequence ID" value="AAA36173.1"/>
    <property type="molecule type" value="mRNA"/>
</dbReference>
<dbReference type="EMBL" id="AY596461">
    <property type="protein sequence ID" value="AAS89303.1"/>
    <property type="molecule type" value="Genomic_DNA"/>
</dbReference>
<dbReference type="EMBL" id="BC074816">
    <property type="protein sequence ID" value="AAH74816.1"/>
    <property type="molecule type" value="mRNA"/>
</dbReference>
<dbReference type="EMBL" id="BC074817">
    <property type="protein sequence ID" value="AAH74817.1"/>
    <property type="molecule type" value="mRNA"/>
</dbReference>
<dbReference type="EMBL" id="D00187">
    <property type="protein sequence ID" value="BAA00128.1"/>
    <property type="molecule type" value="mRNA"/>
</dbReference>
<dbReference type="EMBL" id="X05875">
    <property type="protein sequence ID" value="CAA29299.1"/>
    <property type="molecule type" value="mRNA"/>
</dbReference>
<dbReference type="EMBL" id="X05875">
    <property type="protein sequence ID" value="CAA29300.1"/>
    <property type="status" value="ALT_INIT"/>
    <property type="molecule type" value="mRNA"/>
</dbReference>
<dbReference type="EMBL" id="J03545">
    <property type="protein sequence ID" value="AAA52378.1"/>
    <property type="molecule type" value="mRNA"/>
</dbReference>
<dbReference type="EMBL" id="M27783">
    <property type="protein sequence ID" value="AAA35792.1"/>
    <property type="molecule type" value="mRNA"/>
</dbReference>
<dbReference type="CCDS" id="CCDS12045.1"/>
<dbReference type="PIR" id="A31976">
    <property type="entry name" value="ELHUL"/>
</dbReference>
<dbReference type="RefSeq" id="NP_001963.1">
    <property type="nucleotide sequence ID" value="NM_001972.4"/>
</dbReference>
<dbReference type="RefSeq" id="XP_011526077.1">
    <property type="nucleotide sequence ID" value="XM_011527775.1"/>
</dbReference>
<dbReference type="RefSeq" id="XP_011526078.1">
    <property type="nucleotide sequence ID" value="XM_011527776.1"/>
</dbReference>
<dbReference type="RefSeq" id="XP_054176121.1">
    <property type="nucleotide sequence ID" value="XM_054320146.1"/>
</dbReference>
<dbReference type="RefSeq" id="XP_054176122.1">
    <property type="nucleotide sequence ID" value="XM_054320147.1"/>
</dbReference>
<dbReference type="RefSeq" id="XP_054185414.1">
    <property type="nucleotide sequence ID" value="XM_054329439.1"/>
</dbReference>
<dbReference type="RefSeq" id="XP_054185415.1">
    <property type="nucleotide sequence ID" value="XM_054329440.1"/>
</dbReference>
<dbReference type="PDB" id="1B0F">
    <property type="method" value="X-ray"/>
    <property type="resolution" value="3.00 A"/>
    <property type="chains" value="A=30-247"/>
</dbReference>
<dbReference type="PDB" id="1H1B">
    <property type="method" value="X-ray"/>
    <property type="resolution" value="2.00 A"/>
    <property type="chains" value="A/B=30-247"/>
</dbReference>
<dbReference type="PDB" id="1HNE">
    <property type="method" value="X-ray"/>
    <property type="resolution" value="1.84 A"/>
    <property type="chains" value="E=30-247"/>
</dbReference>
<dbReference type="PDB" id="1PPF">
    <property type="method" value="X-ray"/>
    <property type="resolution" value="1.80 A"/>
    <property type="chains" value="E=30-247"/>
</dbReference>
<dbReference type="PDB" id="1PPG">
    <property type="method" value="X-ray"/>
    <property type="resolution" value="2.30 A"/>
    <property type="chains" value="E=30-247"/>
</dbReference>
<dbReference type="PDB" id="2RG3">
    <property type="method" value="X-ray"/>
    <property type="resolution" value="1.80 A"/>
    <property type="chains" value="A=30-247"/>
</dbReference>
<dbReference type="PDB" id="2Z7F">
    <property type="method" value="X-ray"/>
    <property type="resolution" value="1.70 A"/>
    <property type="chains" value="E=30-247"/>
</dbReference>
<dbReference type="PDB" id="3Q76">
    <property type="method" value="X-ray"/>
    <property type="resolution" value="1.86 A"/>
    <property type="chains" value="A/B=30-247"/>
</dbReference>
<dbReference type="PDB" id="3Q77">
    <property type="method" value="X-ray"/>
    <property type="resolution" value="2.00 A"/>
    <property type="chains" value="A=30-247"/>
</dbReference>
<dbReference type="PDB" id="4NZL">
    <property type="method" value="X-ray"/>
    <property type="resolution" value="1.85 A"/>
    <property type="chains" value="A=30-247"/>
</dbReference>
<dbReference type="PDB" id="4WVP">
    <property type="method" value="X-ray"/>
    <property type="resolution" value="1.63 A"/>
    <property type="chains" value="E=30-247"/>
</dbReference>
<dbReference type="PDB" id="5A09">
    <property type="method" value="X-ray"/>
    <property type="resolution" value="1.81 A"/>
    <property type="chains" value="A=30-247"/>
</dbReference>
<dbReference type="PDB" id="5A0A">
    <property type="method" value="X-ray"/>
    <property type="resolution" value="1.78 A"/>
    <property type="chains" value="E=30-247"/>
</dbReference>
<dbReference type="PDB" id="5A0B">
    <property type="method" value="X-ray"/>
    <property type="resolution" value="2.23 A"/>
    <property type="chains" value="A=30-247"/>
</dbReference>
<dbReference type="PDB" id="5A0C">
    <property type="method" value="X-ray"/>
    <property type="resolution" value="2.10 A"/>
    <property type="chains" value="A/B=30-247"/>
</dbReference>
<dbReference type="PDB" id="5A8X">
    <property type="method" value="X-ray"/>
    <property type="resolution" value="2.23 A"/>
    <property type="chains" value="A=30-247"/>
</dbReference>
<dbReference type="PDB" id="5A8Y">
    <property type="method" value="X-ray"/>
    <property type="resolution" value="1.90 A"/>
    <property type="chains" value="A=30-247"/>
</dbReference>
<dbReference type="PDB" id="5A8Z">
    <property type="method" value="X-ray"/>
    <property type="resolution" value="2.00 A"/>
    <property type="chains" value="A=30-247"/>
</dbReference>
<dbReference type="PDB" id="5ABW">
    <property type="method" value="X-ray"/>
    <property type="resolution" value="1.60 A"/>
    <property type="chains" value="A=30-247"/>
</dbReference>
<dbReference type="PDB" id="6E69">
    <property type="method" value="X-ray"/>
    <property type="resolution" value="2.33 A"/>
    <property type="chains" value="A/B/C/D=30-247"/>
</dbReference>
<dbReference type="PDB" id="6F5M">
    <property type="method" value="X-ray"/>
    <property type="resolution" value="2.70 A"/>
    <property type="chains" value="A/B=30-247"/>
</dbReference>
<dbReference type="PDB" id="6SMA">
    <property type="method" value="X-ray"/>
    <property type="resolution" value="2.59 A"/>
    <property type="chains" value="A/B/C=30-247"/>
</dbReference>
<dbReference type="PDB" id="7CBK">
    <property type="method" value="X-ray"/>
    <property type="resolution" value="2.70 A"/>
    <property type="chains" value="B/D=1-267"/>
</dbReference>
<dbReference type="PDB" id="7WHU">
    <property type="method" value="X-ray"/>
    <property type="resolution" value="2.89 A"/>
    <property type="chains" value="A/B/C/D=1-267"/>
</dbReference>
<dbReference type="PDB" id="8D4Q">
    <property type="method" value="X-ray"/>
    <property type="resolution" value="2.20 A"/>
    <property type="chains" value="A/B=30-247"/>
</dbReference>
<dbReference type="PDB" id="8D4U">
    <property type="method" value="X-ray"/>
    <property type="resolution" value="1.90 A"/>
    <property type="chains" value="A/B=30-247"/>
</dbReference>
<dbReference type="PDB" id="8D7I">
    <property type="method" value="X-ray"/>
    <property type="resolution" value="3.63 A"/>
    <property type="chains" value="A/D/G/J/M/P=30-247"/>
</dbReference>
<dbReference type="PDB" id="8D7K">
    <property type="method" value="X-ray"/>
    <property type="resolution" value="3.10 A"/>
    <property type="chains" value="A/D/G/J=30-247"/>
</dbReference>
<dbReference type="PDB" id="8G24">
    <property type="method" value="X-ray"/>
    <property type="resolution" value="1.82 A"/>
    <property type="chains" value="B=30-247"/>
</dbReference>
<dbReference type="PDB" id="8G25">
    <property type="method" value="X-ray"/>
    <property type="resolution" value="1.80 A"/>
    <property type="chains" value="B/E/H=30-247"/>
</dbReference>
<dbReference type="PDB" id="8G26">
    <property type="method" value="X-ray"/>
    <property type="resolution" value="1.85 A"/>
    <property type="chains" value="B=30-247"/>
</dbReference>
<dbReference type="PDB" id="8QGX">
    <property type="method" value="X-ray"/>
    <property type="resolution" value="2.30 A"/>
    <property type="chains" value="A=30-247"/>
</dbReference>
<dbReference type="PDB" id="8VK5">
    <property type="method" value="X-ray"/>
    <property type="resolution" value="1.56 A"/>
    <property type="chains" value="E=30-247"/>
</dbReference>
<dbReference type="PDB" id="9ASS">
    <property type="method" value="X-ray"/>
    <property type="resolution" value="1.75 A"/>
    <property type="chains" value="A=30-247"/>
</dbReference>
<dbReference type="PDB" id="9ASX">
    <property type="method" value="X-ray"/>
    <property type="resolution" value="1.96 A"/>
    <property type="chains" value="B=30-247"/>
</dbReference>
<dbReference type="PDB" id="9ATK">
    <property type="method" value="X-ray"/>
    <property type="resolution" value="2.11 A"/>
    <property type="chains" value="A/D/G/J=30-247"/>
</dbReference>
<dbReference type="PDB" id="9ATU">
    <property type="method" value="X-ray"/>
    <property type="resolution" value="2.05 A"/>
    <property type="chains" value="A/C/D/F=30-247"/>
</dbReference>
<dbReference type="PDBsum" id="1B0F"/>
<dbReference type="PDBsum" id="1H1B"/>
<dbReference type="PDBsum" id="1HNE"/>
<dbReference type="PDBsum" id="1PPF"/>
<dbReference type="PDBsum" id="1PPG"/>
<dbReference type="PDBsum" id="2RG3"/>
<dbReference type="PDBsum" id="2Z7F"/>
<dbReference type="PDBsum" id="3Q76"/>
<dbReference type="PDBsum" id="3Q77"/>
<dbReference type="PDBsum" id="4NZL"/>
<dbReference type="PDBsum" id="4WVP"/>
<dbReference type="PDBsum" id="5A09"/>
<dbReference type="PDBsum" id="5A0A"/>
<dbReference type="PDBsum" id="5A0B"/>
<dbReference type="PDBsum" id="5A0C"/>
<dbReference type="PDBsum" id="5A8X"/>
<dbReference type="PDBsum" id="5A8Y"/>
<dbReference type="PDBsum" id="5A8Z"/>
<dbReference type="PDBsum" id="5ABW"/>
<dbReference type="PDBsum" id="6E69"/>
<dbReference type="PDBsum" id="6F5M"/>
<dbReference type="PDBsum" id="6SMA"/>
<dbReference type="PDBsum" id="7CBK"/>
<dbReference type="PDBsum" id="7WHU"/>
<dbReference type="PDBsum" id="8D4Q"/>
<dbReference type="PDBsum" id="8D4U"/>
<dbReference type="PDBsum" id="8D7I"/>
<dbReference type="PDBsum" id="8D7K"/>
<dbReference type="PDBsum" id="8G24"/>
<dbReference type="PDBsum" id="8G25"/>
<dbReference type="PDBsum" id="8G26"/>
<dbReference type="PDBsum" id="8QGX"/>
<dbReference type="PDBsum" id="8VK5"/>
<dbReference type="PDBsum" id="9ASS"/>
<dbReference type="PDBsum" id="9ASX"/>
<dbReference type="PDBsum" id="9ATK"/>
<dbReference type="PDBsum" id="9ATU"/>
<dbReference type="SASBDB" id="P08246"/>
<dbReference type="SMR" id="P08246"/>
<dbReference type="BioGRID" id="108306">
    <property type="interactions" value="40"/>
</dbReference>
<dbReference type="CORUM" id="P08246"/>
<dbReference type="FunCoup" id="P08246">
    <property type="interactions" value="267"/>
</dbReference>
<dbReference type="IntAct" id="P08246">
    <property type="interactions" value="19"/>
</dbReference>
<dbReference type="MINT" id="P08246"/>
<dbReference type="STRING" id="9606.ENSP00000466090"/>
<dbReference type="BindingDB" id="P08246"/>
<dbReference type="ChEMBL" id="CHEMBL248"/>
<dbReference type="DrugBank" id="DB04459">
    <property type="generic name" value="3,4-Dichloroisocoumarin"/>
</dbReference>
<dbReference type="DrugBank" id="DB00058">
    <property type="generic name" value="Alpha-1-proteinase inhibitor"/>
</dbReference>
<dbReference type="DrugBank" id="DB11863">
    <property type="generic name" value="Alvelestat"/>
</dbReference>
<dbReference type="DrugBank" id="DB17873">
    <property type="generic name" value="Depelestat"/>
</dbReference>
<dbReference type="DrugBank" id="DB18488">
    <property type="generic name" value="DMP-777"/>
</dbReference>
<dbReference type="DrugBank" id="DB05161">
    <property type="generic name" value="Elafin"/>
</dbReference>
<dbReference type="DrugBank" id="DB12116">
    <property type="generic name" value="Epigallocatechin gallate"/>
</dbReference>
<dbReference type="DrugBank" id="DB00099">
    <property type="generic name" value="Filgrastim"/>
</dbReference>
<dbReference type="DrugBank" id="DB03925">
    <property type="generic name" value="Freselestat"/>
</dbReference>
<dbReference type="DrugBank" id="DB12622">
    <property type="generic name" value="Lupeol"/>
</dbReference>
<dbReference type="DrugBank" id="DB02341">
    <property type="generic name" value="Mdl 101,146"/>
</dbReference>
<dbReference type="DrugBank" id="DB00019">
    <property type="generic name" value="Pegfilgrastim"/>
</dbReference>
<dbReference type="DrugBank" id="DB12863">
    <property type="generic name" value="Sivelestat"/>
</dbReference>
<dbReference type="DrugBank" id="DB18368">
    <property type="generic name" value="Tiprelestat"/>
</dbReference>
<dbReference type="DrugBank" id="DB15588">
    <property type="generic name" value="Ursolic acid"/>
</dbReference>
<dbReference type="DrugCentral" id="P08246"/>
<dbReference type="GuidetoPHARMACOLOGY" id="2358"/>
<dbReference type="MEROPS" id="S01.131"/>
<dbReference type="GlyConnect" id="1564">
    <property type="glycosylation" value="3 N-Linked glycans (2 sites)"/>
</dbReference>
<dbReference type="GlyCosmos" id="P08246">
    <property type="glycosylation" value="3 sites, 3 glycans"/>
</dbReference>
<dbReference type="GlyGen" id="P08246">
    <property type="glycosylation" value="4 sites, 14 N-linked glycans (2 sites)"/>
</dbReference>
<dbReference type="iPTMnet" id="P08246"/>
<dbReference type="PhosphoSitePlus" id="P08246"/>
<dbReference type="BioMuta" id="ELANE"/>
<dbReference type="DMDM" id="119292"/>
<dbReference type="jPOST" id="P08246"/>
<dbReference type="MassIVE" id="P08246"/>
<dbReference type="PaxDb" id="9606-ENSP00000466090"/>
<dbReference type="PeptideAtlas" id="P08246"/>
<dbReference type="PRIDE" id="P08246"/>
<dbReference type="ProteomicsDB" id="52099"/>
<dbReference type="ABCD" id="P08246">
    <property type="antibodies" value="2 sequenced antibodies"/>
</dbReference>
<dbReference type="Antibodypedia" id="4209">
    <property type="antibodies" value="715 antibodies from 42 providers"/>
</dbReference>
<dbReference type="DNASU" id="1991"/>
<dbReference type="Ensembl" id="ENST00000263621.2">
    <property type="protein sequence ID" value="ENSP00000263621.1"/>
    <property type="gene ID" value="ENSG00000197561.7"/>
</dbReference>
<dbReference type="Ensembl" id="ENST00000590230.5">
    <property type="protein sequence ID" value="ENSP00000466090.1"/>
    <property type="gene ID" value="ENSG00000197561.7"/>
</dbReference>
<dbReference type="Ensembl" id="ENST00000615489.1">
    <property type="protein sequence ID" value="ENSP00000480128.1"/>
    <property type="gene ID" value="ENSG00000277571.2"/>
</dbReference>
<dbReference type="Ensembl" id="ENST00000632488.1">
    <property type="protein sequence ID" value="ENSP00000488075.1"/>
    <property type="gene ID" value="ENSG00000277571.2"/>
</dbReference>
<dbReference type="GeneID" id="1991"/>
<dbReference type="KEGG" id="hsa:1991"/>
<dbReference type="MANE-Select" id="ENST00000263621.2">
    <property type="protein sequence ID" value="ENSP00000263621.1"/>
    <property type="RefSeq nucleotide sequence ID" value="NM_001972.4"/>
    <property type="RefSeq protein sequence ID" value="NP_001963.1"/>
</dbReference>
<dbReference type="UCSC" id="uc002lqb.4">
    <property type="organism name" value="human"/>
</dbReference>
<dbReference type="AGR" id="HGNC:3309"/>
<dbReference type="CTD" id="1991"/>
<dbReference type="DisGeNET" id="1991"/>
<dbReference type="GeneCards" id="ELANE"/>
<dbReference type="GeneReviews" id="ELANE"/>
<dbReference type="HGNC" id="HGNC:3309">
    <property type="gene designation" value="ELANE"/>
</dbReference>
<dbReference type="HPA" id="ENSG00000197561">
    <property type="expression patterns" value="Tissue enriched (bone)"/>
</dbReference>
<dbReference type="MalaCards" id="ELANE"/>
<dbReference type="MIM" id="130130">
    <property type="type" value="gene"/>
</dbReference>
<dbReference type="MIM" id="162800">
    <property type="type" value="phenotype"/>
</dbReference>
<dbReference type="MIM" id="202700">
    <property type="type" value="phenotype"/>
</dbReference>
<dbReference type="neXtProt" id="NX_P08246"/>
<dbReference type="OpenTargets" id="ENSG00000197561"/>
<dbReference type="Orphanet" id="486">
    <property type="disease" value="Autosomal dominant severe congenital neutropenia"/>
</dbReference>
<dbReference type="Orphanet" id="2686">
    <property type="disease" value="Cyclic neutropenia"/>
</dbReference>
<dbReference type="PharmGKB" id="PA27735"/>
<dbReference type="VEuPathDB" id="HostDB:ENSG00000197561"/>
<dbReference type="eggNOG" id="KOG3627">
    <property type="taxonomic scope" value="Eukaryota"/>
</dbReference>
<dbReference type="GeneTree" id="ENSGT01030000234528"/>
<dbReference type="HOGENOM" id="CLU_006842_1_0_1"/>
<dbReference type="InParanoid" id="P08246"/>
<dbReference type="OMA" id="RRRVNVC"/>
<dbReference type="OrthoDB" id="8440449at2759"/>
<dbReference type="PAN-GO" id="P08246">
    <property type="GO annotations" value="5 GO annotations based on evolutionary models"/>
</dbReference>
<dbReference type="PhylomeDB" id="P08246"/>
<dbReference type="BRENDA" id="3.4.21.37">
    <property type="organism ID" value="2681"/>
</dbReference>
<dbReference type="PathwayCommons" id="P08246"/>
<dbReference type="Reactome" id="R-HSA-1442490">
    <property type="pathway name" value="Collagen degradation"/>
</dbReference>
<dbReference type="Reactome" id="R-HSA-1474228">
    <property type="pathway name" value="Degradation of the extracellular matrix"/>
</dbReference>
<dbReference type="Reactome" id="R-HSA-1592389">
    <property type="pathway name" value="Activation of Matrix Metalloproteinases"/>
</dbReference>
<dbReference type="Reactome" id="R-HSA-5620971">
    <property type="pathway name" value="Pyroptosis"/>
</dbReference>
<dbReference type="Reactome" id="R-HSA-6798695">
    <property type="pathway name" value="Neutrophil degranulation"/>
</dbReference>
<dbReference type="Reactome" id="R-HSA-6803157">
    <property type="pathway name" value="Antimicrobial peptides"/>
</dbReference>
<dbReference type="Reactome" id="R-HSA-977606">
    <property type="pathway name" value="Regulation of Complement cascade"/>
</dbReference>
<dbReference type="Reactome" id="R-HSA-9911233">
    <property type="pathway name" value="Expression of NOTCH2NL genes"/>
</dbReference>
<dbReference type="SABIO-RK" id="P08246"/>
<dbReference type="SignaLink" id="P08246"/>
<dbReference type="SIGNOR" id="P08246"/>
<dbReference type="STRENDA-DB" id="5V5MWU">
    <property type="experiment" value="Human Neutrophil Elastase: Kinetics with Four Synthetic Substrates"/>
</dbReference>
<dbReference type="BioGRID-ORCS" id="1991">
    <property type="hits" value="20 hits in 1161 CRISPR screens"/>
</dbReference>
<dbReference type="ChiTaRS" id="ELANE">
    <property type="organism name" value="human"/>
</dbReference>
<dbReference type="EvolutionaryTrace" id="P08246"/>
<dbReference type="GeneWiki" id="Neutrophil_elastase"/>
<dbReference type="GenomeRNAi" id="1991"/>
<dbReference type="Pharos" id="P08246">
    <property type="development level" value="Tclin"/>
</dbReference>
<dbReference type="PRO" id="PR:P08246"/>
<dbReference type="Proteomes" id="UP000005640">
    <property type="component" value="Chromosome 19"/>
</dbReference>
<dbReference type="RNAct" id="P08246">
    <property type="molecule type" value="protein"/>
</dbReference>
<dbReference type="Bgee" id="ENSG00000197561">
    <property type="expression patterns" value="Expressed in bone marrow and 85 other cell types or tissues"/>
</dbReference>
<dbReference type="GO" id="GO:0035578">
    <property type="term" value="C:azurophil granule lumen"/>
    <property type="evidence" value="ECO:0000304"/>
    <property type="project" value="Reactome"/>
</dbReference>
<dbReference type="GO" id="GO:0009986">
    <property type="term" value="C:cell surface"/>
    <property type="evidence" value="ECO:0000314"/>
    <property type="project" value="UniProtKB"/>
</dbReference>
<dbReference type="GO" id="GO:0062023">
    <property type="term" value="C:collagen-containing extracellular matrix"/>
    <property type="evidence" value="ECO:0007005"/>
    <property type="project" value="BHF-UCL"/>
</dbReference>
<dbReference type="GO" id="GO:0005737">
    <property type="term" value="C:cytoplasm"/>
    <property type="evidence" value="ECO:0000314"/>
    <property type="project" value="UniProtKB"/>
</dbReference>
<dbReference type="GO" id="GO:0005829">
    <property type="term" value="C:cytosol"/>
    <property type="evidence" value="ECO:0000304"/>
    <property type="project" value="Reactome"/>
</dbReference>
<dbReference type="GO" id="GO:0070062">
    <property type="term" value="C:extracellular exosome"/>
    <property type="evidence" value="ECO:0007005"/>
    <property type="project" value="UniProtKB"/>
</dbReference>
<dbReference type="GO" id="GO:0005576">
    <property type="term" value="C:extracellular region"/>
    <property type="evidence" value="ECO:0000304"/>
    <property type="project" value="Reactome"/>
</dbReference>
<dbReference type="GO" id="GO:0005615">
    <property type="term" value="C:extracellular space"/>
    <property type="evidence" value="ECO:0000314"/>
    <property type="project" value="UniProtKB"/>
</dbReference>
<dbReference type="GO" id="GO:0005794">
    <property type="term" value="C:Golgi apparatus"/>
    <property type="evidence" value="ECO:0000314"/>
    <property type="project" value="HPA"/>
</dbReference>
<dbReference type="GO" id="GO:0043231">
    <property type="term" value="C:intracellular membrane-bounded organelle"/>
    <property type="evidence" value="ECO:0000314"/>
    <property type="project" value="HPA"/>
</dbReference>
<dbReference type="GO" id="GO:0045335">
    <property type="term" value="C:phagocytic vesicle"/>
    <property type="evidence" value="ECO:0007669"/>
    <property type="project" value="UniProtKB-SubCell"/>
</dbReference>
<dbReference type="GO" id="GO:0030141">
    <property type="term" value="C:secretory granule"/>
    <property type="evidence" value="ECO:0000314"/>
    <property type="project" value="MGI"/>
</dbReference>
<dbReference type="GO" id="GO:0035580">
    <property type="term" value="C:specific granule lumen"/>
    <property type="evidence" value="ECO:0000304"/>
    <property type="project" value="Reactome"/>
</dbReference>
<dbReference type="GO" id="GO:0017053">
    <property type="term" value="C:transcription repressor complex"/>
    <property type="evidence" value="ECO:0000314"/>
    <property type="project" value="UniProtKB"/>
</dbReference>
<dbReference type="GO" id="GO:0019955">
    <property type="term" value="F:cytokine binding"/>
    <property type="evidence" value="ECO:0000353"/>
    <property type="project" value="UniProtKB"/>
</dbReference>
<dbReference type="GO" id="GO:0004175">
    <property type="term" value="F:endopeptidase activity"/>
    <property type="evidence" value="ECO:0000314"/>
    <property type="project" value="UniProtKB"/>
</dbReference>
<dbReference type="GO" id="GO:0008201">
    <property type="term" value="F:heparin binding"/>
    <property type="evidence" value="ECO:0000314"/>
    <property type="project" value="MGI"/>
</dbReference>
<dbReference type="GO" id="GO:0008233">
    <property type="term" value="F:peptidase activity"/>
    <property type="evidence" value="ECO:0000314"/>
    <property type="project" value="UniProtKB"/>
</dbReference>
<dbReference type="GO" id="GO:0002020">
    <property type="term" value="F:protease binding"/>
    <property type="evidence" value="ECO:0000353"/>
    <property type="project" value="BHF-UCL"/>
</dbReference>
<dbReference type="GO" id="GO:0004252">
    <property type="term" value="F:serine-type endopeptidase activity"/>
    <property type="evidence" value="ECO:0000314"/>
    <property type="project" value="UniProtKB"/>
</dbReference>
<dbReference type="GO" id="GO:0003714">
    <property type="term" value="F:transcription corepressor activity"/>
    <property type="evidence" value="ECO:0000315"/>
    <property type="project" value="UniProtKB"/>
</dbReference>
<dbReference type="GO" id="GO:0002438">
    <property type="term" value="P:acute inflammatory response to antigenic stimulus"/>
    <property type="evidence" value="ECO:0000318"/>
    <property type="project" value="GO_Central"/>
</dbReference>
<dbReference type="GO" id="GO:0002812">
    <property type="term" value="P:biosynthetic process of antibacterial peptides active against Gram-negative bacteria"/>
    <property type="evidence" value="ECO:0000314"/>
    <property type="project" value="UniProtKB"/>
</dbReference>
<dbReference type="GO" id="GO:0042742">
    <property type="term" value="P:defense response to bacterium"/>
    <property type="evidence" value="ECO:0000314"/>
    <property type="project" value="UniProtKB"/>
</dbReference>
<dbReference type="GO" id="GO:0022617">
    <property type="term" value="P:extracellular matrix disassembly"/>
    <property type="evidence" value="ECO:0000304"/>
    <property type="project" value="Reactome"/>
</dbReference>
<dbReference type="GO" id="GO:0006874">
    <property type="term" value="P:intracellular calcium ion homeostasis"/>
    <property type="evidence" value="ECO:0000303"/>
    <property type="project" value="UniProtKB"/>
</dbReference>
<dbReference type="GO" id="GO:0002523">
    <property type="term" value="P:leukocyte migration involved in inflammatory response"/>
    <property type="evidence" value="ECO:0007669"/>
    <property type="project" value="Ensembl"/>
</dbReference>
<dbReference type="GO" id="GO:0032682">
    <property type="term" value="P:negative regulation of chemokine production"/>
    <property type="evidence" value="ECO:0000314"/>
    <property type="project" value="UniProtKB"/>
</dbReference>
<dbReference type="GO" id="GO:0050922">
    <property type="term" value="P:negative regulation of chemotaxis"/>
    <property type="evidence" value="ECO:0000303"/>
    <property type="project" value="UniProtKB"/>
</dbReference>
<dbReference type="GO" id="GO:0050728">
    <property type="term" value="P:negative regulation of inflammatory response"/>
    <property type="evidence" value="ECO:0000303"/>
    <property type="project" value="UniProtKB"/>
</dbReference>
<dbReference type="GO" id="GO:0032717">
    <property type="term" value="P:negative regulation of interleukin-8 production"/>
    <property type="evidence" value="ECO:0000314"/>
    <property type="project" value="UniProtKB"/>
</dbReference>
<dbReference type="GO" id="GO:0000122">
    <property type="term" value="P:negative regulation of transcription by RNA polymerase II"/>
    <property type="evidence" value="ECO:0000315"/>
    <property type="project" value="UniProtKB"/>
</dbReference>
<dbReference type="GO" id="GO:0070947">
    <property type="term" value="P:neutrophil-mediated killing of fungus"/>
    <property type="evidence" value="ECO:0007669"/>
    <property type="project" value="Ensembl"/>
</dbReference>
<dbReference type="GO" id="GO:0070945">
    <property type="term" value="P:neutrophil-mediated killing of gram-negative bacterium"/>
    <property type="evidence" value="ECO:0000314"/>
    <property type="project" value="UniProtKB"/>
</dbReference>
<dbReference type="GO" id="GO:0006909">
    <property type="term" value="P:phagocytosis"/>
    <property type="evidence" value="ECO:0000318"/>
    <property type="project" value="GO_Central"/>
</dbReference>
<dbReference type="GO" id="GO:0050778">
    <property type="term" value="P:positive regulation of immune response"/>
    <property type="evidence" value="ECO:0007669"/>
    <property type="project" value="Ensembl"/>
</dbReference>
<dbReference type="GO" id="GO:0032757">
    <property type="term" value="P:positive regulation of interleukin-8 production"/>
    <property type="evidence" value="ECO:0000314"/>
    <property type="project" value="UniProtKB"/>
</dbReference>
<dbReference type="GO" id="GO:1903238">
    <property type="term" value="P:positive regulation of leukocyte tethering or rolling"/>
    <property type="evidence" value="ECO:0007669"/>
    <property type="project" value="Ensembl"/>
</dbReference>
<dbReference type="GO" id="GO:0043406">
    <property type="term" value="P:positive regulation of MAP kinase activity"/>
    <property type="evidence" value="ECO:0000303"/>
    <property type="project" value="UniProtKB"/>
</dbReference>
<dbReference type="GO" id="GO:0048661">
    <property type="term" value="P:positive regulation of smooth muscle cell proliferation"/>
    <property type="evidence" value="ECO:0000314"/>
    <property type="project" value="UniProtKB"/>
</dbReference>
<dbReference type="GO" id="GO:0030163">
    <property type="term" value="P:protein catabolic process"/>
    <property type="evidence" value="ECO:0000303"/>
    <property type="project" value="UniProtKB"/>
</dbReference>
<dbReference type="GO" id="GO:0006508">
    <property type="term" value="P:proteolysis"/>
    <property type="evidence" value="ECO:0000314"/>
    <property type="project" value="UniProtKB"/>
</dbReference>
<dbReference type="GO" id="GO:0070269">
    <property type="term" value="P:pyroptotic inflammatory response"/>
    <property type="evidence" value="ECO:0000304"/>
    <property type="project" value="Reactome"/>
</dbReference>
<dbReference type="GO" id="GO:0032496">
    <property type="term" value="P:response to lipopolysaccharide"/>
    <property type="evidence" value="ECO:0007669"/>
    <property type="project" value="Ensembl"/>
</dbReference>
<dbReference type="GO" id="GO:0009411">
    <property type="term" value="P:response to UV"/>
    <property type="evidence" value="ECO:0000314"/>
    <property type="project" value="UniProtKB"/>
</dbReference>
<dbReference type="GO" id="GO:0001878">
    <property type="term" value="P:response to yeast"/>
    <property type="evidence" value="ECO:0007669"/>
    <property type="project" value="Ensembl"/>
</dbReference>
<dbReference type="CDD" id="cd00190">
    <property type="entry name" value="Tryp_SPc"/>
    <property type="match status" value="1"/>
</dbReference>
<dbReference type="FunFam" id="2.40.10.10:FF:000274">
    <property type="match status" value="1"/>
</dbReference>
<dbReference type="FunFam" id="2.40.10.10:FF:000052">
    <property type="entry name" value="Neutrophil elastase"/>
    <property type="match status" value="1"/>
</dbReference>
<dbReference type="Gene3D" id="2.40.10.10">
    <property type="entry name" value="Trypsin-like serine proteases"/>
    <property type="match status" value="2"/>
</dbReference>
<dbReference type="InterPro" id="IPR050850">
    <property type="entry name" value="Peptidase_S1_Elastase_sf"/>
</dbReference>
<dbReference type="InterPro" id="IPR009003">
    <property type="entry name" value="Peptidase_S1_PA"/>
</dbReference>
<dbReference type="InterPro" id="IPR043504">
    <property type="entry name" value="Peptidase_S1_PA_chymotrypsin"/>
</dbReference>
<dbReference type="InterPro" id="IPR001314">
    <property type="entry name" value="Peptidase_S1A"/>
</dbReference>
<dbReference type="InterPro" id="IPR001254">
    <property type="entry name" value="Trypsin_dom"/>
</dbReference>
<dbReference type="InterPro" id="IPR018114">
    <property type="entry name" value="TRYPSIN_HIS"/>
</dbReference>
<dbReference type="InterPro" id="IPR033116">
    <property type="entry name" value="TRYPSIN_SER"/>
</dbReference>
<dbReference type="PANTHER" id="PTHR24257">
    <property type="entry name" value="CHYMOTRYPSIN-LIKE ELASTASE FAMILY MEMBER"/>
    <property type="match status" value="1"/>
</dbReference>
<dbReference type="PANTHER" id="PTHR24257:SF16">
    <property type="entry name" value="NEUTROPHIL ELASTASE"/>
    <property type="match status" value="1"/>
</dbReference>
<dbReference type="Pfam" id="PF00089">
    <property type="entry name" value="Trypsin"/>
    <property type="match status" value="1"/>
</dbReference>
<dbReference type="PRINTS" id="PR00722">
    <property type="entry name" value="CHYMOTRYPSIN"/>
</dbReference>
<dbReference type="SMART" id="SM00020">
    <property type="entry name" value="Tryp_SPc"/>
    <property type="match status" value="1"/>
</dbReference>
<dbReference type="SUPFAM" id="SSF50494">
    <property type="entry name" value="Trypsin-like serine proteases"/>
    <property type="match status" value="1"/>
</dbReference>
<dbReference type="PROSITE" id="PS50240">
    <property type="entry name" value="TRYPSIN_DOM"/>
    <property type="match status" value="1"/>
</dbReference>
<dbReference type="PROSITE" id="PS00134">
    <property type="entry name" value="TRYPSIN_HIS"/>
    <property type="match status" value="1"/>
</dbReference>
<dbReference type="PROSITE" id="PS00135">
    <property type="entry name" value="TRYPSIN_SER"/>
    <property type="match status" value="1"/>
</dbReference>
<comment type="function">
    <text evidence="4 10 18 23 27 29">Serine protease that modifies the functions of natural killer cells, monocytes and granulocytes. Inhibits C5a-dependent neutrophil enzyme release and chemotaxis (PubMed:15140022). Promotes cleavage of GSDMB, thereby inhibiting pyroptosis (PubMed:36899106). Promotes blood coagulation (PubMed:20676107). Through the activation of the platelet fibrinogen receptor integrin alpha-IIb/beta-3, potentiates platelet aggregation induced by a threshold concentration of cathepsin G (CTSG) (PubMed:25211214, PubMed:9111081). Cleaves and thus inactivates tissue factor pathway inhibitor (TFPI) (PubMed:20676107, PubMed:25211214). Capable of killing E.coli but not S.aureus in vitro; digests outer membrane protein A (ompA) in E.coli and K.pneumoniae (PubMed:10947984).</text>
</comment>
<comment type="catalytic activity">
    <reaction evidence="27">
        <text>Hydrolysis of proteins, including elastin. Preferential cleavage: Val-|-Xaa &gt; Ala-|-Xaa.</text>
        <dbReference type="EC" id="3.4.21.37"/>
    </reaction>
</comment>
<comment type="subunit">
    <text evidence="8 23">Interacts with NOTCH2NL (PubMed:14673143). Interacts with agaphelin, an antihemostatic protein from Anopheles gambiae (PubMed:25211214).</text>
</comment>
<comment type="interaction">
    <interactant intactId="EBI-986345">
        <id>P08246</id>
    </interactant>
    <interactant intactId="EBI-6251005">
        <id>Q07563</id>
        <label>Col17a1</label>
    </interactant>
    <organismsDiffer>true</organismsDiffer>
    <experiments>2</experiments>
</comment>
<comment type="interaction">
    <interactant intactId="EBI-986345">
        <id>P08246</id>
    </interactant>
    <interactant intactId="EBI-25474821">
        <id>P0DTC2</id>
        <label>S</label>
    </interactant>
    <organismsDiffer>true</organismsDiffer>
    <experiments>2</experiments>
</comment>
<comment type="subcellular location">
    <subcellularLocation>
        <location evidence="4">Cytoplasmic vesicle</location>
        <location evidence="4">Phagosome</location>
    </subcellularLocation>
    <text evidence="4">Localized in phagolysosomes following ingestion of E.coli by neutrophils.</text>
</comment>
<comment type="tissue specificity">
    <text evidence="4">Bone marrow cells. Neutrophil (PubMed:10947984).</text>
</comment>
<comment type="disease" evidence="3 5 8 9 21">
    <disease id="DI-01463">
        <name>Cyclic haematopoiesis</name>
        <acronym>CH</acronym>
        <description>Autosomal dominant disease in which blood-cell production from the bone marrow oscillates with 21-day periodicity. Circulating neutrophils vary between almost normal numbers and zero. During intervals of neutropenia, affected individuals are at risk for opportunistic infection. Monocytes, platelets, lymphocytes and reticulocytes also cycle with the same frequency.</description>
        <dbReference type="MIM" id="162800"/>
    </disease>
    <text>The disease is caused by variants affecting the gene represented in this entry.</text>
</comment>
<comment type="disease" evidence="5 6 7 9 11 12 13 15 16 17 19 20 21">
    <disease id="DI-01225">
        <name>Neutropenia, severe congenital 1, autosomal dominant</name>
        <acronym>SCN1</acronym>
        <description>A disorder of hematopoiesis characterized by maturation arrest of granulopoiesis at the level of promyelocytes with peripheral blood absolute neutrophil counts below 0.5 x 10(9)/l and early onset of severe bacterial infections.</description>
        <dbReference type="MIM" id="202700"/>
    </disease>
    <text>The disease is caused by variants affecting the gene represented in this entry.</text>
</comment>
<comment type="similarity">
    <text evidence="2">Belongs to the peptidase S1 family. Elastase subfamily.</text>
</comment>
<comment type="sequence caution" evidence="31">
    <conflict type="erroneous initiation">
        <sequence resource="EMBL-CDS" id="CAA29300"/>
    </conflict>
    <text>Truncated N-terminus.</text>
</comment>
<comment type="online information" name="ELA2base">
    <link uri="https://databases.lovd.nl/shared/genes/ELANE"/>
    <text>ELA2 mutation db</text>
</comment>
<comment type="online information" name="Wikipedia">
    <link uri="https://en.wikipedia.org/wiki/Elastase"/>
    <text>Elastase entry</text>
</comment>
<reference key="1">
    <citation type="journal article" date="1987" name="Nucleic Acids Res.">
        <title>Nucleotide sequence of human bone marrow serine protease (medullasin) gene.</title>
        <authorList>
            <person name="Nakamura H."/>
            <person name="Okano K."/>
            <person name="Aoki Y."/>
            <person name="Shimizu H."/>
            <person name="Naruto M."/>
        </authorList>
    </citation>
    <scope>NUCLEOTIDE SEQUENCE [GENOMIC DNA]</scope>
</reference>
<reference key="2">
    <citation type="journal article" date="1988" name="J. Biol. Chem.">
        <title>Structure of the human neutrophil elastase gene.</title>
        <authorList>
            <person name="Takahashi H."/>
            <person name="Nukiwa T."/>
            <person name="Yoshimura K."/>
            <person name="Quick C.D."/>
            <person name="States D.J."/>
            <person name="Holmes M.D."/>
            <person name="Whang-Peng J."/>
            <person name="Knutsen T."/>
            <person name="Crystal R.G."/>
        </authorList>
    </citation>
    <scope>NUCLEOTIDE SEQUENCE [GENOMIC DNA]</scope>
</reference>
<reference key="3">
    <citation type="journal article" date="1989" name="Biol. Chem. Hoppe-Seyler">
        <title>The human neutrophil elastase gene. Analysis of the nucleotide sequence reveals three distinct classes of repetitive DNA.</title>
        <authorList>
            <person name="Farley D."/>
            <person name="Travis J."/>
            <person name="Salvesen G."/>
        </authorList>
    </citation>
    <scope>NUCLEOTIDE SEQUENCE [GENOMIC DNA]</scope>
</reference>
<reference key="4">
    <citation type="journal article" date="1990" name="Biochem. Biophys. Res. Commun.">
        <title>Functional expression of human leukocyte elastase (HLE)/medullasin in eukaryotic cells.</title>
        <authorList>
            <person name="Okano K."/>
            <person name="Aoki Y."/>
            <person name="Shimizu H."/>
            <person name="Naruto M."/>
        </authorList>
    </citation>
    <scope>NUCLEOTIDE SEQUENCE [MRNA]</scope>
</reference>
<reference key="5">
    <citation type="submission" date="2004-04" db="EMBL/GenBank/DDBJ databases">
        <authorList>
            <consortium name="NIEHS SNPs program"/>
        </authorList>
    </citation>
    <scope>NUCLEOTIDE SEQUENCE [GENOMIC DNA]</scope>
    <scope>VARIANTS ILE-219; LEU-257 AND LEU-262</scope>
</reference>
<reference key="6">
    <citation type="journal article" date="2004" name="Genome Res.">
        <title>The status, quality, and expansion of the NIH full-length cDNA project: the Mammalian Gene Collection (MGC).</title>
        <authorList>
            <consortium name="The MGC Project Team"/>
        </authorList>
    </citation>
    <scope>NUCLEOTIDE SEQUENCE [LARGE SCALE MRNA]</scope>
    <source>
        <tissue>Lung</tissue>
    </source>
</reference>
<reference key="7">
    <citation type="journal article" date="1987" name="J. Biochem.">
        <title>Molecular cloning of complementary DNA for human medullasin: an inflammatory serine protease in bone marrow cells.</title>
        <authorList>
            <person name="Okano K."/>
            <person name="Aoki Y."/>
            <person name="Sakurai T."/>
            <person name="Kajitani M."/>
            <person name="Kanai S."/>
            <person name="Shimazu T."/>
            <person name="Shimizu H."/>
            <person name="Naruto M."/>
        </authorList>
    </citation>
    <scope>NUCLEOTIDE SEQUENCE [MRNA] OF 30-267</scope>
</reference>
<reference key="8">
    <citation type="journal article" date="1987" name="Proc. Natl. Acad. Sci. U.S.A.">
        <title>Primary structure of human neutrophil elastase.</title>
        <authorList>
            <person name="Sinha S."/>
            <person name="Watorek W."/>
            <person name="Karr S."/>
            <person name="Giles J."/>
            <person name="Bode W."/>
            <person name="Travis J."/>
        </authorList>
    </citation>
    <scope>PROTEIN SEQUENCE OF 30-247</scope>
    <scope>GLYCOSYLATION AT ASN-124 AND ASN-173</scope>
</reference>
<reference key="9">
    <citation type="book" date="1980" name="Protein degradation in health and disease, Ciba Foundation Symposium">
        <title>Human leucocyte elastase and cathepsin G: structural and functional characteristics.</title>
        <editorList>
            <person name="Evered D."/>
            <person name="Whelan J."/>
        </editorList>
        <authorList>
            <person name="Travis J."/>
            <person name="Giles P.J."/>
            <person name="Porcelli L."/>
            <person name="Reilly C.F."/>
            <person name="Baugh R."/>
            <person name="Powers J."/>
        </authorList>
    </citation>
    <scope>PRELIMINARY PROTEIN SEQUENCE OF 30-103</scope>
</reference>
<reference key="10">
    <citation type="journal article" date="1989" name="Proc. Natl. Acad. Sci. U.S.A.">
        <title>Antibiotic proteins of human polymorphonuclear leukocytes.</title>
        <authorList>
            <person name="Gabay J.E."/>
            <person name="Scott R.W."/>
            <person name="Campanelli D."/>
            <person name="Griffith J."/>
            <person name="Wilde C."/>
            <person name="Marra M.N."/>
            <person name="Seeger M."/>
            <person name="Nathan C.F."/>
        </authorList>
    </citation>
    <scope>PROTEIN SEQUENCE OF 30-49</scope>
</reference>
<reference key="11">
    <citation type="journal article" date="1995" name="J. Immunol. Methods">
        <title>Use of proteinase 3 purified by reverse phase HPLC to detect autoantibodies in systemic vasculitis.</title>
        <authorList>
            <person name="Gaskin G."/>
            <person name="Kendal H."/>
            <person name="Coulthart A."/>
            <person name="Turner N."/>
            <person name="Pusey C.D."/>
        </authorList>
    </citation>
    <scope>PROTEIN SEQUENCE OF 30-49</scope>
    <source>
        <tissue>Neutrophil</tissue>
    </source>
</reference>
<reference key="12">
    <citation type="journal article" date="1988" name="J. Biol. Chem.">
        <title>Myelomonocytic cell lineage expression of the neutrophil elastase gene.</title>
        <authorList>
            <person name="Takahashi H."/>
            <person name="Nukiwa T."/>
            <person name="Basset P."/>
            <person name="Cystal R.G."/>
        </authorList>
    </citation>
    <scope>NUCLEOTIDE SEQUENCE [MRNA] OF 75-267</scope>
</reference>
<reference key="13">
    <citation type="journal article" date="2015" name="Biomolecules">
        <title>Complementary LC-MS/MS-Based N-Glycan, N-Glycopeptide, and Intact N-Glycoprotein Profiling Reveals Unconventional Asn71-Glycosylation of Human Neutrophil Cathepsin G.</title>
        <authorList>
            <person name="Loke I."/>
            <person name="Packer N.H."/>
            <person name="Thaysen-Andersen M."/>
        </authorList>
    </citation>
    <scope>PROTEIN SEQUENCE OF 122-129</scope>
    <scope>GLYCOSYLATION AT ASN-124</scope>
</reference>
<reference key="14">
    <citation type="journal article" date="1988" name="Biol. Chem. Hoppe-Seyler">
        <title>Molecular cloning of human neutrophil elastase.</title>
        <authorList>
            <person name="Farley D."/>
            <person name="Salvesen G.S."/>
            <person name="Travis J."/>
        </authorList>
    </citation>
    <scope>NUCLEOTIDE SEQUENCE [MRNA] OF 123-267</scope>
</reference>
<reference key="15">
    <citation type="journal article" date="1991" name="Biochem. Biophys. Res. Commun.">
        <title>The primary structure and elastinolytic activity of medullasin (a serine protease of bone marrow).</title>
        <authorList>
            <person name="Aoki Y."/>
            <person name="Hase T."/>
        </authorList>
    </citation>
    <scope>PROTEIN SEQUENCE OF 262-267</scope>
</reference>
<reference key="16">
    <citation type="journal article" date="1997" name="J. Biol. Chem.">
        <title>Human neutrophil elastase proteolytically activates the platelet integrin alphaIIbbeta3 through cleavage of the carboxyl terminus of the alphaIIb subunit heavy chain. Involvement in the potentiation of platelet aggregation.</title>
        <authorList>
            <person name="Si-Tahar M."/>
            <person name="Pidard D."/>
            <person name="Balloy V."/>
            <person name="Moniatte M."/>
            <person name="Kieffer N."/>
            <person name="Van Dorsselaer A."/>
            <person name="Chignard M."/>
        </authorList>
    </citation>
    <scope>FUNCTION</scope>
</reference>
<reference key="17">
    <citation type="journal article" date="2000" name="Science">
        <title>Degradation of outer membrane protein A in Escherichia coli killing by neutrophil elastase.</title>
        <authorList>
            <person name="Belaaouaj A."/>
            <person name="Kim K.S."/>
            <person name="Shapiro S.D."/>
        </authorList>
    </citation>
    <scope>FUNCTION IN DEFENSE AGAINST BACTERIA</scope>
    <scope>SUBCELLULAR LOCATION</scope>
    <scope>TISSUE SPECIFICITY</scope>
</reference>
<reference key="18">
    <citation type="journal article" date="2004" name="Exp. Dermatol.">
        <title>Human leukocyte elastase and cathepsin G are specific inhibitors of C5a-dependent neutrophil enzyme release and chemotaxis.</title>
        <authorList>
            <person name="Tralau T."/>
            <person name="Meyer-Hoffert U."/>
            <person name="Schroder J.M."/>
            <person name="Wiedow O."/>
        </authorList>
    </citation>
    <scope>FUNCTION</scope>
</reference>
<reference key="19">
    <citation type="journal article" date="2004" name="Mol. Cell. Biol.">
        <title>A novel notch protein, N2N, targeted by neutrophil elastase and implicated in hereditary neutropenia.</title>
        <authorList>
            <person name="Duan Z."/>
            <person name="Li F.-Q."/>
            <person name="Wechsler J."/>
            <person name="Meade-White K."/>
            <person name="Williams K."/>
            <person name="Benson K.F."/>
            <person name="Horwitz M."/>
        </authorList>
    </citation>
    <scope>INTERACTION WITH NOTCH2NL</scope>
    <scope>CHARACTERIZATION OF VARIANT CH GLN-220</scope>
</reference>
<reference key="20">
    <citation type="journal article" date="2009" name="J. Proteome Res.">
        <title>Glycoproteomics analysis of human liver tissue by combination of multiple enzyme digestion and hydrazide chemistry.</title>
        <authorList>
            <person name="Chen R."/>
            <person name="Jiang X."/>
            <person name="Sun D."/>
            <person name="Han G."/>
            <person name="Wang F."/>
            <person name="Ye M."/>
            <person name="Wang L."/>
            <person name="Zou H."/>
        </authorList>
    </citation>
    <scope>GLYCOSYLATION [LARGE SCALE ANALYSIS] AT ASN-88 AND ASN-173</scope>
    <source>
        <tissue>Liver</tissue>
    </source>
</reference>
<reference key="21">
    <citation type="journal article" date="2010" name="Nat. Med.">
        <title>Reciprocal coupling of coagulation and innate immunity via neutrophil serine proteases.</title>
        <authorList>
            <person name="Massberg S."/>
            <person name="Grahl L."/>
            <person name="von Bruehl M.L."/>
            <person name="Manukyan D."/>
            <person name="Pfeiler S."/>
            <person name="Goosmann C."/>
            <person name="Brinkmann V."/>
            <person name="Lorenz M."/>
            <person name="Bidzhekov K."/>
            <person name="Khandagale A.B."/>
            <person name="Konrad I."/>
            <person name="Kennerknecht E."/>
            <person name="Reges K."/>
            <person name="Holdenrieder S."/>
            <person name="Braun S."/>
            <person name="Reinhardt C."/>
            <person name="Spannagl M."/>
            <person name="Preissner K.T."/>
            <person name="Engelmann B."/>
        </authorList>
    </citation>
    <scope>FUNCTION</scope>
</reference>
<reference key="22">
    <citation type="journal article" date="2011" name="BMC Syst. Biol.">
        <title>Initial characterization of the human central proteome.</title>
        <authorList>
            <person name="Burkard T.R."/>
            <person name="Planyavsky M."/>
            <person name="Kaupe I."/>
            <person name="Breitwieser F.P."/>
            <person name="Buerckstuemmer T."/>
            <person name="Bennett K.L."/>
            <person name="Superti-Furga G."/>
            <person name="Colinge J."/>
        </authorList>
    </citation>
    <scope>IDENTIFICATION BY MASS SPECTROMETRY [LARGE SCALE ANALYSIS]</scope>
</reference>
<reference evidence="31" key="23">
    <citation type="journal article" date="2014" name="PLoS Pathog.">
        <title>Plasmodium falciparum infection induces expression of a mosquito salivary protein (Agaphelin) that targets neutrophil function and inhibits thrombosis without impairing hemostasis.</title>
        <authorList>
            <person name="Waisberg M."/>
            <person name="Molina-Cruz A."/>
            <person name="Mizurini D.M."/>
            <person name="Gera N."/>
            <person name="Sousa B.C."/>
            <person name="Ma D."/>
            <person name="Leal A.C."/>
            <person name="Gomes T."/>
            <person name="Kotsyfakis M."/>
            <person name="Ribeiro J.M."/>
            <person name="Lukszo J."/>
            <person name="Reiter K."/>
            <person name="Porcella S.F."/>
            <person name="Oliveira C.J."/>
            <person name="Monteiro R.Q."/>
            <person name="Barillas-Mury C."/>
            <person name="Pierce S.K."/>
            <person name="Francischetti I.M."/>
        </authorList>
    </citation>
    <scope>FUNCTION</scope>
    <scope>INTERACTION WITH MOSQUITO AGAPHELIN</scope>
</reference>
<reference key="24">
    <citation type="journal article" date="2015" name="Proteomics">
        <title>N-terminome analysis of the human mitochondrial proteome.</title>
        <authorList>
            <person name="Vaca Jacome A.S."/>
            <person name="Rabilloud T."/>
            <person name="Schaeffer-Reiss C."/>
            <person name="Rompais M."/>
            <person name="Ayoub D."/>
            <person name="Lane L."/>
            <person name="Bairoch A."/>
            <person name="Van Dorsselaer A."/>
            <person name="Carapito C."/>
        </authorList>
    </citation>
    <scope>IDENTIFICATION BY MASS SPECTROMETRY [LARGE SCALE ANALYSIS]</scope>
</reference>
<reference key="25">
    <citation type="journal article" date="2023" name="Cell Death Differ.">
        <title>Distinct GSDMB protein isoforms and protease cleavage processes differentially control pyroptotic cell death and mitochondrial damage in cancer cells.</title>
        <authorList>
            <person name="Oltra S.S."/>
            <person name="Colomo S."/>
            <person name="Sin L."/>
            <person name="Perez-Lopez M."/>
            <person name="Lazaro S."/>
            <person name="Molina-Crespo A."/>
            <person name="Choi K.H."/>
            <person name="Ros-Pardo D."/>
            <person name="Martinez L."/>
            <person name="Morales S."/>
            <person name="Gonzalez-Paramos C."/>
            <person name="Orantes A."/>
            <person name="Soriano M."/>
            <person name="Hernandez A."/>
            <person name="Lluch A."/>
            <person name="Rojo F."/>
            <person name="Albanell J."/>
            <person name="Gomez-Puertas P."/>
            <person name="Ko J.K."/>
            <person name="Sarrio D."/>
            <person name="Moreno-Bueno G."/>
        </authorList>
    </citation>
    <scope>FUNCTION</scope>
    <scope>CATALYTIC ACTIVITY</scope>
</reference>
<reference key="26">
    <citation type="journal article" date="1989" name="Proc. Natl. Acad. Sci. U.S.A.">
        <title>Structure of human neutrophil elastase in complex with a peptide chloromethyl ketone inhibitor at 1.84-A resolution.</title>
        <authorList>
            <person name="Navia M.A."/>
            <person name="McKeever B.M."/>
            <person name="Springer J.P."/>
            <person name="Lin T.-Y."/>
            <person name="Williams H.R."/>
            <person name="Fluder E.M."/>
            <person name="Dorn C.P."/>
            <person name="Hoogsteen K."/>
        </authorList>
    </citation>
    <scope>X-RAY CRYSTALLOGRAPHY (1.84 ANGSTROMS)</scope>
    <scope>ACTIVE SITES</scope>
</reference>
<reference key="27">
    <citation type="journal article" date="1988" name="FEBS Lett.">
        <title>The refined 2.3-A crystal structure of human leukocyte elastase in a complex with a valine chloromethyl ketone inhibitor.</title>
        <authorList>
            <person name="Wei A.-Z."/>
            <person name="Mayr I."/>
            <person name="Bode W."/>
        </authorList>
    </citation>
    <scope>X-RAY CRYSTALLOGRAPHY (2.3 ANGSTROMS)</scope>
</reference>
<reference key="28">
    <citation type="journal article" date="1986" name="EMBO J.">
        <title>X-ray crystal structure of the complex of human leukocyte elastase (PMN elastase) and the third domain of the turkey ovomucoid inhibitor.</title>
        <authorList>
            <person name="Bode W."/>
            <person name="Wei A.-Z."/>
            <person name="Huber R."/>
            <person name="Meyer E."/>
            <person name="Travis J."/>
            <person name="Neumann S."/>
        </authorList>
    </citation>
    <scope>X-RAY CRYSTALLOGRAPHY (1.7 ANGSTROMS)</scope>
</reference>
<reference key="29">
    <citation type="journal article" date="1999" name="Nat. Genet.">
        <title>Mutations in ELA2, encoding neutrophil elastase, define a 21-day biological clock in cyclic haematopoiesis.</title>
        <authorList>
            <person name="Horwitz M."/>
            <person name="Benson K.F."/>
            <person name="Person R.E."/>
            <person name="Aprikyan A.G."/>
            <person name="Dale D.C."/>
        </authorList>
    </citation>
    <scope>VARIANTS CH VAL-61; PHE-206 AND GLN-220</scope>
</reference>
<reference key="30">
    <citation type="journal article" date="2000" name="Blood">
        <title>Mutations in the gene encoding neutrophil elastase in congenital and cyclic neutropenia.</title>
        <authorList>
            <person name="Dale D.C."/>
            <person name="Person R.E."/>
            <person name="Bolyard A.A."/>
            <person name="Aprikyan A.G."/>
            <person name="Bos C."/>
            <person name="Bonilla M.A."/>
            <person name="Boxer L.A."/>
            <person name="Kannourakis G."/>
            <person name="Zeidler C."/>
            <person name="Welte K."/>
            <person name="Benson K.F."/>
            <person name="Horwitz M."/>
        </authorList>
    </citation>
    <scope>VARIANTS SCN1 THR-57; THR-60; SER-71; MET-101; LEU-126; LEU-139; VAL-210 AND ARG-214</scope>
    <scope>VARIANT CH LEU-139</scope>
</reference>
<reference key="31">
    <citation type="journal article" date="2001" name="Blood">
        <title>Mutations in the ELA2 gene encoding neutrophil elastase are present in most patients with sporadic severe congenital neutropenia but only in some patients with the familial form of the disease.</title>
        <authorList>
            <person name="Ancliff P.J."/>
            <person name="Gale R.E."/>
            <person name="Liesner R."/>
            <person name="Hann I.M."/>
            <person name="Linch D.C."/>
        </authorList>
    </citation>
    <scope>VARIANTS SCN1 TYR-55; GLU-85; PRO-GLN-LEU-123 INS; LEU-126; SER-151; 190-VAL--PHE-199 DEL AND ARG-205</scope>
</reference>
<reference key="32">
    <citation type="journal article" date="2002" name="Blood">
        <title>Paternal mosaicism proves the pathogenic nature of mutations in neutrophil elastase in severe congenital neutropenia.</title>
        <authorList>
            <person name="Ancliff P.J."/>
            <person name="Gale R.E."/>
            <person name="Watts M.J."/>
            <person name="Liesner R."/>
            <person name="Hann I.M."/>
            <person name="Strobel S."/>
            <person name="Linch D.C."/>
        </authorList>
    </citation>
    <scope>VARIANT SCN1 ARG-71</scope>
</reference>
<reference key="33">
    <citation type="journal article" date="2004" name="Blood">
        <title>Mutations in the ELA2 gene correlate with more severe expression of neutropenia: a study of 81 patients from the French Neutropenia Register.</title>
        <authorList>
            <person name="Bellanne-Chantelot C."/>
            <person name="Clauin S."/>
            <person name="Leblanc T."/>
            <person name="Cassinat B."/>
            <person name="Rodrigues-Lima F."/>
            <person name="Beaufils S."/>
            <person name="Vaury C."/>
            <person name="Barkaoui M."/>
            <person name="Fenneteau O."/>
            <person name="Maier-Redelsperger M."/>
            <person name="Chomienne C."/>
            <person name="Donadieu J."/>
        </authorList>
    </citation>
    <scope>VARIANTS SCN1 LEU-42; PRO-47; LEU-53; PRO-81; PRO-84; PRO-121; PRO-127; LEU-139; PRO-152 AND 190-VAL--PHE-199 DEL</scope>
    <scope>VARIANTS CH LEU-43; PHE-46; MET-82; LEU-126; LEU-139; 190-VAL--PHE-199 DEL AND GLN-220</scope>
    <scope>VARIANTS ILE-219 AND LEU-262</scope>
</reference>
<reference key="34">
    <citation type="journal article" date="2007" name="Hum. Mutat.">
        <title>Double de novo mutations of ELA2 in cyclic and severe congenital neutropenia.</title>
        <authorList>
            <person name="Salipante S.J."/>
            <person name="Benson K.F."/>
            <person name="Luty J."/>
            <person name="Hadavi V."/>
            <person name="Kariminejad R."/>
            <person name="Kariminejad M.H."/>
            <person name="Rezaei N."/>
            <person name="Horwitz M.S."/>
        </authorList>
    </citation>
    <scope>VARIANTS SCN1 LEU-98 AND LEU-101</scope>
    <scope>CHARACTERIZATION OF VARIANTS SCN1 LEU-98 AND LEU-101</scope>
</reference>
<reference key="35">
    <citation type="journal article" date="2009" name="Ann. Hematol.">
        <title>A novel mutation Ala57Val of the ELA2 gene in a Korean boy with severe congenital neutropenia.</title>
        <authorList>
            <person name="Lee S.T."/>
            <person name="Yoon H.S."/>
            <person name="Kim H.J."/>
            <person name="Lee J.H."/>
            <person name="Park J.H."/>
            <person name="Kim S.H."/>
            <person name="Seo J.J."/>
            <person name="Im H.J."/>
        </authorList>
    </citation>
    <scope>VARIANT SCN1 VAL-57</scope>
</reference>
<reference key="36">
    <citation type="journal article" date="2009" name="Br. J. Haematol.">
        <title>Homozygous HAX1 mutations in severe congenital neutropenia patients with sporadic disease: a novel mutation in two unrelated British kindreds.</title>
        <authorList>
            <person name="Smith B.N."/>
            <person name="Ancliff P.J."/>
            <person name="Pizzey A."/>
            <person name="Khwaja A."/>
            <person name="Linch D.C."/>
            <person name="Gale R.E."/>
        </authorList>
    </citation>
    <scope>VARIANTS SCN1 ARG-44; CYS-46; TYR-53; ARG-85; ARG-203 AND CYS-203</scope>
</reference>
<reference key="37">
    <citation type="journal article" date="2009" name="J. Pediatr. Hematol. Oncol.">
        <title>Ela2 mutations and clinical manifestations in familial congenital neutropenia.</title>
        <authorList>
            <person name="Shiohara M."/>
            <person name="Shigemura T."/>
            <person name="Saito S."/>
            <person name="Tanaka M."/>
            <person name="Yanagisawa R."/>
            <person name="Sakashita K."/>
            <person name="Asada H."/>
            <person name="Ishii E."/>
            <person name="Koike K."/>
            <person name="Chin M."/>
            <person name="Kobayashi M."/>
            <person name="Koike K."/>
        </authorList>
    </citation>
    <scope>VARIANTS SCN1 LEU-42; PRO-81; MET-101 AND LEU-126</scope>
</reference>
<reference key="38">
    <citation type="journal article" date="2010" name="Haematologica">
        <title>Digenic mutations in severe congenital neutropenia.</title>
        <authorList>
            <person name="Germeshausen M."/>
            <person name="Zeidler C."/>
            <person name="Stuhrmann M."/>
            <person name="Lanciotti M."/>
            <person name="Ballmaier M."/>
            <person name="Welte K."/>
        </authorList>
    </citation>
    <scope>VARIANTS SCN1 VAL-25 AND THR-166</scope>
</reference>
<reference key="39">
    <citation type="journal article" date="2010" name="Pediatr. Blood Cancer">
        <title>Pegfilgrastim in children with severe congenital neutropenia.</title>
        <authorList>
            <person name="Fioredda F."/>
            <person name="Calvillo M."/>
            <person name="Lanciotti M."/>
            <person name="Lanza T."/>
            <person name="Giunti L."/>
            <person name="Castagnola E."/>
            <person name="Lorenzi I."/>
            <person name="Tonelli R."/>
            <person name="Ghezzi P."/>
            <person name="Dufour C."/>
        </authorList>
    </citation>
    <scope>VARIANTS SCN1 PRO-59 AND GLU-235</scope>
</reference>
<reference key="40">
    <citation type="journal article" date="2011" name="Ann. Hematol.">
        <title>Severe congenital neutropenia in a multigenerational family with a novel neutrophil elastase (ELANE) mutation.</title>
        <authorList>
            <person name="van de Vosse E."/>
            <person name="Verhard E.M."/>
            <person name="Tool A.J."/>
            <person name="de Visser A.W."/>
            <person name="Kuijpers T.W."/>
            <person name="Hiemstra P.S."/>
            <person name="van Dissel J.T."/>
        </authorList>
    </citation>
    <scope>VARIANT SCN1 SER-57</scope>
</reference>
<reference key="41">
    <citation type="journal article" date="2011" name="Pediatr. Blood Cancer">
        <title>Four novel ELANE mutations in patients with congenital neutropenia.</title>
        <authorList>
            <person name="Kurnikova M."/>
            <person name="Maschan M."/>
            <person name="Dinova E."/>
            <person name="Shagina I."/>
            <person name="Finogenova N."/>
            <person name="Mamedova E."/>
            <person name="Polovtseva T."/>
            <person name="Shagin D."/>
            <person name="Shcherbina A."/>
        </authorList>
    </citation>
    <scope>VARIANTS SCN1 THR-131; PRO-152; GLY-235 AND 190-VAL--PHE-199 DEL</scope>
</reference>
<reference key="42">
    <citation type="journal article" date="2013" name="Hum. Mutat.">
        <title>The spectrum of ELANE mutations and their implications in severe congenital and cyclic neutropenia.</title>
        <authorList>
            <person name="Germeshausen M."/>
            <person name="Deerberg S."/>
            <person name="Peter Y."/>
            <person name="Reimer C."/>
            <person name="Kratz C.P."/>
            <person name="Ballmaier M."/>
        </authorList>
    </citation>
    <scope>VARIANTS SCN1 VAL-25; LEU-42; LEU-43; GLU-45; PHE-46; ARG-47; PRO-49; SER-55; ARG-56; SER-57; THR-57; VAL-57; PRO-59; 60-ILE-ALA-61 DELINS ARG; THR-60; VAL-61; VAL-65 DEL; 66-MET--HIS-70 DEL; TRP-67; ARG-71; PHE-71; TYR-71; GLY-72; GLY-80; PRO-81; MET-82; PRO-84; GLU-85; LEU-98; MET-98; LEU-101; MET-101; LEU-103; PRO-103; ASN-120; PHE-120; SER-120; PRO-121; HIS-123; ILE-124; LEU-126; ASP-127; THR-131; ASP-136; ARG-139; LEU-139; PHE-151; TRP-151; TYR-151; PRO-152; ASP-153; PRO-153; ARG-156; CYS-156; THR-166; ARG-203; ARG-205; SER-206; GLY-208; ARG-214; GLU-214; GLN-220; PRO-233; GLU-235 AND GLY-235</scope>
    <scope>VARIANTS CH LEU-45; VAL-61; PRO-81; LEU-97; ASN-104; PHE-120; LEU-126; LEU-139; HIS-143; 190-VAL--PHE-199 DEL; CYS-203; ILE-209; TRP-210 AND GLN-220</scope>
    <scope>VARIANTS VAL-118; ARG-125; MET-135; ILE-219 AND LEU-257</scope>
</reference>
<name>ELNE_HUMAN</name>
<organism>
    <name type="scientific">Homo sapiens</name>
    <name type="common">Human</name>
    <dbReference type="NCBI Taxonomy" id="9606"/>
    <lineage>
        <taxon>Eukaryota</taxon>
        <taxon>Metazoa</taxon>
        <taxon>Chordata</taxon>
        <taxon>Craniata</taxon>
        <taxon>Vertebrata</taxon>
        <taxon>Euteleostomi</taxon>
        <taxon>Mammalia</taxon>
        <taxon>Eutheria</taxon>
        <taxon>Euarchontoglires</taxon>
        <taxon>Primates</taxon>
        <taxon>Haplorrhini</taxon>
        <taxon>Catarrhini</taxon>
        <taxon>Hominidae</taxon>
        <taxon>Homo</taxon>
    </lineage>
</organism>
<feature type="signal peptide" evidence="1">
    <location>
        <begin position="1"/>
        <end position="27"/>
    </location>
</feature>
<feature type="propeptide" id="PRO_0000027703" evidence="22 26 28">
    <location>
        <begin position="28"/>
        <end position="29"/>
    </location>
</feature>
<feature type="chain" id="PRO_0000027704" description="Neutrophil elastase">
    <location>
        <begin position="30"/>
        <end position="267"/>
    </location>
</feature>
<feature type="domain" description="Peptidase S1" evidence="2">
    <location>
        <begin position="30"/>
        <end position="247"/>
    </location>
</feature>
<feature type="active site" description="Charge relay system" evidence="25">
    <location>
        <position position="70"/>
    </location>
</feature>
<feature type="active site" description="Charge relay system" evidence="25">
    <location>
        <position position="117"/>
    </location>
</feature>
<feature type="active site" description="Charge relay system" evidence="25">
    <location>
        <position position="202"/>
    </location>
</feature>
<feature type="glycosylation site" description="N-linked (GlcNAc...) asparagine" evidence="14">
    <location>
        <position position="88"/>
    </location>
</feature>
<feature type="glycosylation site" description="N-linked (GlcNAc...) asparagine" evidence="24 26">
    <location>
        <position position="124"/>
    </location>
</feature>
<feature type="glycosylation site" description="N-linked (GlcNAc...) asparagine" evidence="14 26">
    <location>
        <position position="173"/>
    </location>
</feature>
<feature type="disulfide bond" evidence="2 26">
    <location>
        <begin position="55"/>
        <end position="71"/>
    </location>
</feature>
<feature type="disulfide bond" evidence="2 26">
    <location>
        <begin position="151"/>
        <end position="208"/>
    </location>
</feature>
<feature type="disulfide bond" evidence="2 26">
    <location>
        <begin position="181"/>
        <end position="187"/>
    </location>
</feature>
<feature type="disulfide bond" evidence="2 26">
    <location>
        <begin position="198"/>
        <end position="223"/>
    </location>
</feature>
<feature type="sequence variant" id="VAR_064512" description="In SCN1; dbSNP:rs1396230082." evidence="17 21">
    <original>A</original>
    <variation>V</variation>
    <location>
        <position position="25"/>
    </location>
</feature>
<feature type="sequence variant" id="VAR_070696" description="In SCN1." evidence="9 15 21">
    <original>P</original>
    <variation>L</variation>
    <location>
        <position position="42"/>
    </location>
</feature>
<feature type="sequence variant" id="VAR_070697" description="In SCN1 and CH." evidence="9 21">
    <original>F</original>
    <variation>L</variation>
    <location>
        <position position="43"/>
    </location>
</feature>
<feature type="sequence variant" id="VAR_070698" description="In SCN1." evidence="13">
    <original>M</original>
    <variation>R</variation>
    <location>
        <position position="44"/>
    </location>
</feature>
<feature type="sequence variant" id="VAR_070699" description="In SCN1." evidence="21">
    <original>V</original>
    <variation>E</variation>
    <location>
        <position position="45"/>
    </location>
</feature>
<feature type="sequence variant" id="VAR_070700" description="In CH." evidence="21">
    <original>V</original>
    <variation>L</variation>
    <location>
        <position position="45"/>
    </location>
</feature>
<feature type="sequence variant" id="VAR_070701" description="In SCN1." evidence="13">
    <original>S</original>
    <variation>C</variation>
    <location>
        <position position="46"/>
    </location>
</feature>
<feature type="sequence variant" id="VAR_070702" description="In CH and SCN1; dbSNP:rs878855320." evidence="9 21">
    <original>S</original>
    <variation>F</variation>
    <location>
        <position position="46"/>
    </location>
</feature>
<feature type="sequence variant" id="VAR_070703" description="In SCN1; dbSNP:rs878855319." evidence="9">
    <original>L</original>
    <variation>P</variation>
    <location>
        <position position="47"/>
    </location>
</feature>
<feature type="sequence variant" id="VAR_070704" description="In SCN1." evidence="21">
    <original>L</original>
    <variation>R</variation>
    <location>
        <position position="47"/>
    </location>
</feature>
<feature type="sequence variant" id="VAR_070705" description="In SCN1." evidence="21">
    <original>L</original>
    <variation>P</variation>
    <location>
        <position position="49"/>
    </location>
</feature>
<feature type="sequence variant" id="VAR_070706" description="In SCN1." evidence="9">
    <original>H</original>
    <variation>L</variation>
    <location>
        <position position="53"/>
    </location>
</feature>
<feature type="sequence variant" id="VAR_070707" description="In CH.">
    <original>H</original>
    <variation>Q</variation>
    <location>
        <position position="53"/>
    </location>
</feature>
<feature type="sequence variant" id="VAR_070708" description="In SCN1; dbSNP:rs1131691882." evidence="13">
    <original>H</original>
    <variation>Y</variation>
    <location>
        <position position="53"/>
    </location>
</feature>
<feature type="sequence variant" id="VAR_070709" description="In SCN1." evidence="21">
    <original>C</original>
    <variation>S</variation>
    <location>
        <position position="55"/>
    </location>
</feature>
<feature type="sequence variant" id="VAR_038609" description="In SCN1." evidence="6">
    <original>C</original>
    <variation>Y</variation>
    <location>
        <position position="55"/>
    </location>
</feature>
<feature type="sequence variant" id="VAR_070710" description="In SCN1." evidence="21">
    <original>G</original>
    <variation>R</variation>
    <location>
        <position position="56"/>
    </location>
</feature>
<feature type="sequence variant" id="VAR_070711" description="In SCN1." evidence="19 21">
    <original>A</original>
    <variation>S</variation>
    <location>
        <position position="57"/>
    </location>
</feature>
<feature type="sequence variant" id="VAR_038610" description="In SCN1." evidence="5 21">
    <original>A</original>
    <variation>T</variation>
    <location>
        <position position="57"/>
    </location>
</feature>
<feature type="sequence variant" id="VAR_070712" description="In SCN1; dbSNP:rs1057520110." evidence="12 21">
    <original>A</original>
    <variation>V</variation>
    <location>
        <position position="57"/>
    </location>
</feature>
<feature type="sequence variant" id="VAR_070713" description="In SCN1." evidence="16 21">
    <original>L</original>
    <variation>P</variation>
    <location>
        <position position="59"/>
    </location>
</feature>
<feature type="sequence variant" id="VAR_070714" evidence="21">
    <original>IA</original>
    <variation>R</variation>
    <location>
        <begin position="60"/>
        <end position="61"/>
    </location>
</feature>
<feature type="sequence variant" id="VAR_038611" description="In SCN1." evidence="5 21">
    <original>I</original>
    <variation>T</variation>
    <location>
        <position position="60"/>
    </location>
</feature>
<feature type="sequence variant" id="VAR_070715" description="In SCN1 and CH; dbSNP:rs137854447." evidence="3 21">
    <original>A</original>
    <variation>V</variation>
    <location>
        <position position="61"/>
    </location>
</feature>
<feature type="sequence variant" id="VAR_070716" description="In SCN1." evidence="21">
    <location>
        <position position="65"/>
    </location>
</feature>
<feature type="sequence variant" id="VAR_070717" description="In SCN1." evidence="21">
    <location>
        <begin position="66"/>
        <end position="70"/>
    </location>
</feature>
<feature type="sequence variant" id="VAR_070718" description="In SCN1." evidence="21">
    <original>S</original>
    <variation>W</variation>
    <location>
        <position position="67"/>
    </location>
</feature>
<feature type="sequence variant" id="VAR_070719" description="In SCN1; dbSNP:rs878855315." evidence="21">
    <original>C</original>
    <variation>F</variation>
    <location>
        <position position="71"/>
    </location>
</feature>
<feature type="sequence variant" id="VAR_038612" description="In SCN1; dbSNP:rs28931611." evidence="7 21">
    <original>C</original>
    <variation>R</variation>
    <location>
        <position position="71"/>
    </location>
</feature>
<feature type="sequence variant" id="VAR_038613" description="In SCN1." evidence="5">
    <original>C</original>
    <variation>S</variation>
    <location>
        <position position="71"/>
    </location>
</feature>
<feature type="sequence variant" id="VAR_070720" description="In SCN1." evidence="21">
    <original>C</original>
    <variation>Y</variation>
    <location>
        <position position="71"/>
    </location>
</feature>
<feature type="sequence variant" id="VAR_070721" description="In SCN1." evidence="21">
    <original>V</original>
    <variation>G</variation>
    <location>
        <position position="72"/>
    </location>
</feature>
<feature type="sequence variant" id="VAR_070722" description="In SCN1." evidence="21">
    <original>V</original>
    <variation>G</variation>
    <location>
        <position position="80"/>
    </location>
</feature>
<feature type="sequence variant" id="VAR_070723" description="In SCN1 and CH." evidence="9 15 21">
    <original>R</original>
    <variation>P</variation>
    <location>
        <position position="81"/>
    </location>
</feature>
<feature type="sequence variant" id="VAR_070724" description="In SCN1 and CH." evidence="9 21">
    <original>V</original>
    <variation>M</variation>
    <location>
        <position position="82"/>
    </location>
</feature>
<feature type="sequence variant" id="VAR_070725" description="In SCN1; dbSNP:rs1064793108." evidence="9 21">
    <original>L</original>
    <variation>P</variation>
    <location>
        <position position="84"/>
    </location>
</feature>
<feature type="sequence variant" id="VAR_038614" description="In SCN1." evidence="6 21">
    <original>G</original>
    <variation>E</variation>
    <location>
        <position position="85"/>
    </location>
</feature>
<feature type="sequence variant" id="VAR_070726" description="In SCN1." evidence="13">
    <original>G</original>
    <variation>R</variation>
    <location>
        <position position="85"/>
    </location>
</feature>
<feature type="sequence variant" id="VAR_070727" description="In CH." evidence="21">
    <original>Q</original>
    <variation>L</variation>
    <location>
        <position position="97"/>
    </location>
</feature>
<feature type="sequence variant" id="VAR_038615" description="In SCN1; located on the same allele as L-101; reduces proteolytic enzyme activity by slightly less than half; together with L-101 shows an additive effect with minimal remaining enzyme activity; dbSNP:rs267606781." evidence="11 21">
    <original>V</original>
    <variation>L</variation>
    <location>
        <position position="98"/>
    </location>
</feature>
<feature type="sequence variant" id="VAR_070728" description="In SCN1; dbSNP:rs267606781." evidence="21">
    <original>V</original>
    <variation>M</variation>
    <location>
        <position position="98"/>
    </location>
</feature>
<feature type="sequence variant" id="VAR_038616" description="In SCN1; located on the same allele as L-98; reduces proteolytic enzyme activity by slightly less than half; together with L-98 shows an additive effect with minimal remaining enzyme activity; dbSNP:rs137854449." evidence="11 21">
    <original>V</original>
    <variation>L</variation>
    <location>
        <position position="101"/>
    </location>
</feature>
<feature type="sequence variant" id="VAR_038617" description="In SCN1; dbSNP:rs137854449." evidence="5 15 21">
    <original>V</original>
    <variation>M</variation>
    <location>
        <position position="101"/>
    </location>
</feature>
<feature type="sequence variant" id="VAR_070729" description="In SCN1; dbSNP:rs745455816." evidence="21">
    <original>R</original>
    <variation>L</variation>
    <location>
        <position position="103"/>
    </location>
</feature>
<feature type="sequence variant" id="VAR_070730" description="In SCN1." evidence="21">
    <original>R</original>
    <variation>P</variation>
    <location>
        <position position="103"/>
    </location>
</feature>
<feature type="sequence variant" id="VAR_070731" description="In CH." evidence="21">
    <original>I</original>
    <variation>N</variation>
    <location>
        <position position="104"/>
    </location>
</feature>
<feature type="sequence variant" id="VAR_070732" description="In dbSNP:rs1382122842." evidence="21">
    <original>I</original>
    <variation>V</variation>
    <location>
        <position position="118"/>
    </location>
</feature>
<feature type="sequence variant" id="VAR_070733" description="In SCN1 and CH; dbSNP:rs1131691520." evidence="21">
    <original>I</original>
    <variation>F</variation>
    <location>
        <position position="120"/>
    </location>
</feature>
<feature type="sequence variant" id="VAR_070734" description="In SCN1." evidence="21">
    <original>I</original>
    <variation>N</variation>
    <location>
        <position position="120"/>
    </location>
</feature>
<feature type="sequence variant" id="VAR_070735" description="In SCN1." evidence="21">
    <original>I</original>
    <variation>S</variation>
    <location>
        <position position="120"/>
    </location>
</feature>
<feature type="sequence variant" id="VAR_070736" description="In SCN1." evidence="9 21">
    <original>L</original>
    <variation>P</variation>
    <location>
        <position position="121"/>
    </location>
</feature>
<feature type="sequence variant" id="VAR_070737" description="In SCN1." evidence="21">
    <original>L</original>
    <variation>H</variation>
    <location>
        <position position="123"/>
    </location>
</feature>
<feature type="sequence variant" id="VAR_038618" description="In SCN1.">
    <original>L</original>
    <variation>PQL</variation>
    <location>
        <position position="123"/>
    </location>
</feature>
<feature type="sequence variant" id="VAR_070738" description="In SCN1." evidence="21">
    <original>N</original>
    <variation>I</variation>
    <location>
        <position position="124"/>
    </location>
</feature>
<feature type="sequence variant" id="VAR_070739" description="In dbSNP:rs377698556." evidence="21">
    <original>G</original>
    <variation>R</variation>
    <location>
        <position position="125"/>
    </location>
</feature>
<feature type="sequence variant" id="VAR_038619" description="In SCN1 and CH; dbSNP:rs137854450." evidence="5 6 9 15 21">
    <original>S</original>
    <variation>L</variation>
    <location>
        <position position="126"/>
    </location>
</feature>
<feature type="sequence variant" id="VAR_070740" description="In SCN1." evidence="21">
    <original>A</original>
    <variation>D</variation>
    <location>
        <position position="127"/>
    </location>
</feature>
<feature type="sequence variant" id="VAR_070741" description="In SCN1." evidence="9">
    <original>A</original>
    <variation>P</variation>
    <location>
        <position position="127"/>
    </location>
</feature>
<feature type="sequence variant" id="VAR_070742" description="In SCN1; uncertain significance; dbSNP:rs201729066." evidence="20 21">
    <original>A</original>
    <variation>T</variation>
    <location>
        <position position="131"/>
    </location>
</feature>
<feature type="sequence variant" id="VAR_070743" description="In dbSNP:rs774457980." evidence="21">
    <original>V</original>
    <variation>M</variation>
    <location>
        <position position="135"/>
    </location>
</feature>
<feature type="sequence variant" id="VAR_070744" description="In SCN1." evidence="21">
    <original>A</original>
    <variation>D</variation>
    <location>
        <position position="136"/>
    </location>
</feature>
<feature type="sequence variant" id="VAR_038620" description="In SCN1 and CH; dbSNP:rs137854448." evidence="5 9 21">
    <original>P</original>
    <variation>L</variation>
    <location>
        <position position="139"/>
    </location>
</feature>
<feature type="sequence variant" id="VAR_070745" description="In SCN1." evidence="21">
    <original>P</original>
    <variation>R</variation>
    <location>
        <position position="139"/>
    </location>
</feature>
<feature type="sequence variant" id="VAR_070746" description="In CH; uncertain significance; dbSNP:rs200993994." evidence="21">
    <original>R</original>
    <variation>H</variation>
    <location>
        <position position="143"/>
    </location>
</feature>
<feature type="sequence variant" id="VAR_070747" description="In SCN1; dbSNP:rs57246956." evidence="21">
    <original>C</original>
    <variation>F</variation>
    <location>
        <position position="151"/>
    </location>
</feature>
<feature type="sequence variant" id="VAR_038621" description="In SCN1." evidence="6">
    <original>C</original>
    <variation>S</variation>
    <location>
        <position position="151"/>
    </location>
</feature>
<feature type="sequence variant" id="VAR_070748" description="In SCN1." evidence="21">
    <original>C</original>
    <variation>W</variation>
    <location>
        <position position="151"/>
    </location>
</feature>
<feature type="sequence variant" id="VAR_070749" description="In SCN1; uncertain significance; dbSNP:rs57246956." evidence="21">
    <original>C</original>
    <variation>Y</variation>
    <location>
        <position position="151"/>
    </location>
</feature>
<feature type="sequence variant" id="VAR_070750" description="In SCN1." evidence="9 20 21">
    <original>L</original>
    <variation>P</variation>
    <location>
        <position position="152"/>
    </location>
</feature>
<feature type="sequence variant" id="VAR_070751" description="In SCN1." evidence="21">
    <original>A</original>
    <variation>D</variation>
    <location>
        <position position="153"/>
    </location>
</feature>
<feature type="sequence variant" id="VAR_070752" description="In SCN1." evidence="21">
    <original>A</original>
    <variation>P</variation>
    <location>
        <position position="153"/>
    </location>
</feature>
<feature type="sequence variant" id="VAR_070753" description="In SCN1." evidence="21">
    <original>W</original>
    <variation>C</variation>
    <location>
        <position position="156"/>
    </location>
</feature>
<feature type="sequence variant" id="VAR_070754" description="In SCN1." evidence="21">
    <original>W</original>
    <variation>R</variation>
    <location>
        <position position="156"/>
    </location>
</feature>
<feature type="sequence variant" id="VAR_064513" description="In SCN1; the patient also carries mutation Lys-116 in G6PC3; dbSNP:rs201788817." evidence="17 21">
    <original>A</original>
    <variation>T</variation>
    <location>
        <position position="166"/>
    </location>
</feature>
<feature type="sequence variant" id="VAR_038622" description="In SCN1 and CH." evidence="6 9 20 21">
    <location>
        <begin position="190"/>
        <end position="199"/>
    </location>
</feature>
<feature type="sequence variant" id="VAR_070755" description="In SCN1 and CH." evidence="13 21">
    <original>G</original>
    <variation>C</variation>
    <location>
        <position position="203"/>
    </location>
</feature>
<feature type="sequence variant" id="VAR_070756" description="In SCN1; dbSNP:rs201139487." evidence="13 21">
    <original>G</original>
    <variation>R</variation>
    <location>
        <position position="203"/>
    </location>
</feature>
<feature type="sequence variant" id="VAR_038623" description="In SCN1; dbSNP:rs1555710077." evidence="6 21">
    <original>P</original>
    <variation>R</variation>
    <location>
        <position position="205"/>
    </location>
</feature>
<feature type="sequence variant" id="VAR_070757" description="In CH; dbSNP:rs137854446." evidence="3">
    <original>L</original>
    <variation>F</variation>
    <location>
        <position position="206"/>
    </location>
</feature>
<feature type="sequence variant" id="VAR_070758" description="In SCN1." evidence="21">
    <original>L</original>
    <variation>S</variation>
    <location>
        <position position="206"/>
    </location>
</feature>
<feature type="sequence variant" id="VAR_070759" description="In SCN1." evidence="21">
    <original>C</original>
    <variation>G</variation>
    <location>
        <position position="208"/>
    </location>
</feature>
<feature type="sequence variant" id="VAR_070760" description="In CH." evidence="21">
    <original>N</original>
    <variation>I</variation>
    <location>
        <position position="209"/>
    </location>
</feature>
<feature type="sequence variant" id="VAR_038624" description="In SCN1." evidence="5">
    <original>G</original>
    <variation>V</variation>
    <location>
        <position position="210"/>
    </location>
</feature>
<feature type="sequence variant" id="VAR_070761" description="In CH." evidence="21">
    <original>G</original>
    <variation>W</variation>
    <location>
        <position position="210"/>
    </location>
</feature>
<feature type="sequence variant" id="VAR_070762" description="In SCN1." evidence="21">
    <original>G</original>
    <variation>E</variation>
    <location>
        <position position="214"/>
    </location>
</feature>
<feature type="sequence variant" id="VAR_038625" description="In SCN1; dbSNP:rs137854451." evidence="5 21">
    <original>G</original>
    <variation>R</variation>
    <location>
        <position position="214"/>
    </location>
</feature>
<feature type="sequence variant" id="VAR_019237" description="In dbSNP:rs17216656." evidence="9 21 30">
    <original>V</original>
    <variation>I</variation>
    <location>
        <position position="219"/>
    </location>
</feature>
<feature type="sequence variant" id="VAR_070763" description="In CH and SCN1; loss of interaction with NOTCH2NL and loss of NOTCH2NL and NOTCH2 proteolytic cleavage; dbSNP:rs137854445." evidence="3 8 9 21">
    <original>R</original>
    <variation>Q</variation>
    <location>
        <position position="220"/>
    </location>
</feature>
<feature type="sequence variant" id="VAR_070764" description="In SCN1." evidence="21">
    <original>A</original>
    <variation>P</variation>
    <location>
        <position position="233"/>
    </location>
</feature>
<feature type="sequence variant" id="VAR_070765" description="In SCN1." evidence="16 21">
    <original>V</original>
    <variation>E</variation>
    <location>
        <position position="235"/>
    </location>
</feature>
<feature type="sequence variant" id="VAR_070766" description="In SCN1." evidence="20 21">
    <original>V</original>
    <variation>G</variation>
    <location>
        <position position="235"/>
    </location>
</feature>
<feature type="sequence variant" id="VAR_019238" description="In dbSNP:rs17216663." evidence="21 30">
    <original>P</original>
    <variation>L</variation>
    <location>
        <position position="257"/>
    </location>
</feature>
<feature type="sequence variant" id="VAR_019239" description="Found in patients with severe congenital or cyclic neutropenia; dbSNP:rs17216670." evidence="9 30">
    <original>P</original>
    <variation>L</variation>
    <location>
        <position position="262"/>
    </location>
</feature>
<feature type="strand" evidence="34">
    <location>
        <begin position="44"/>
        <end position="49"/>
    </location>
</feature>
<feature type="strand" evidence="34">
    <location>
        <begin position="52"/>
        <end position="61"/>
    </location>
</feature>
<feature type="strand" evidence="34">
    <location>
        <begin position="64"/>
        <end position="67"/>
    </location>
</feature>
<feature type="helix" evidence="34">
    <location>
        <begin position="69"/>
        <end position="72"/>
    </location>
</feature>
<feature type="strand" evidence="35">
    <location>
        <begin position="73"/>
        <end position="75"/>
    </location>
</feature>
<feature type="helix" evidence="34">
    <location>
        <begin position="77"/>
        <end position="79"/>
    </location>
</feature>
<feature type="strand" evidence="34">
    <location>
        <begin position="81"/>
        <end position="85"/>
    </location>
</feature>
<feature type="strand" evidence="34">
    <location>
        <begin position="97"/>
        <end position="106"/>
    </location>
</feature>
<feature type="turn" evidence="34">
    <location>
        <begin position="111"/>
        <end position="114"/>
    </location>
</feature>
<feature type="strand" evidence="34">
    <location>
        <begin position="119"/>
        <end position="125"/>
    </location>
</feature>
<feature type="strand" evidence="32">
    <location>
        <begin position="130"/>
        <end position="132"/>
    </location>
</feature>
<feature type="strand" evidence="34">
    <location>
        <begin position="150"/>
        <end position="158"/>
    </location>
</feature>
<feature type="strand" evidence="33">
    <location>
        <begin position="161"/>
        <end position="163"/>
    </location>
</feature>
<feature type="strand" evidence="34">
    <location>
        <begin position="170"/>
        <end position="177"/>
    </location>
</feature>
<feature type="strand" evidence="34">
    <location>
        <begin position="185"/>
        <end position="189"/>
    </location>
</feature>
<feature type="strand" evidence="34">
    <location>
        <begin position="191"/>
        <end position="193"/>
    </location>
</feature>
<feature type="strand" evidence="34">
    <location>
        <begin position="205"/>
        <end position="208"/>
    </location>
</feature>
<feature type="strand" evidence="34">
    <location>
        <begin position="211"/>
        <end position="218"/>
    </location>
</feature>
<feature type="strand" evidence="34">
    <location>
        <begin position="220"/>
        <end position="222"/>
    </location>
</feature>
<feature type="strand" evidence="34">
    <location>
        <begin position="226"/>
        <end position="228"/>
    </location>
</feature>
<feature type="strand" evidence="34">
    <location>
        <begin position="230"/>
        <end position="234"/>
    </location>
</feature>
<feature type="helix" evidence="34">
    <location>
        <begin position="235"/>
        <end position="238"/>
    </location>
</feature>
<feature type="helix" evidence="34">
    <location>
        <begin position="239"/>
        <end position="246"/>
    </location>
</feature>
<proteinExistence type="evidence at protein level"/>
<keyword id="KW-0002">3D-structure</keyword>
<keyword id="KW-0968">Cytoplasmic vesicle</keyword>
<keyword id="KW-0903">Direct protein sequencing</keyword>
<keyword id="KW-0225">Disease variant</keyword>
<keyword id="KW-1015">Disulfide bond</keyword>
<keyword id="KW-0325">Glycoprotein</keyword>
<keyword id="KW-0378">Hydrolase</keyword>
<keyword id="KW-0645">Protease</keyword>
<keyword id="KW-1267">Proteomics identification</keyword>
<keyword id="KW-1185">Reference proteome</keyword>
<keyword id="KW-0720">Serine protease</keyword>
<keyword id="KW-0732">Signal</keyword>
<keyword id="KW-0865">Zymogen</keyword>
<accession>P08246</accession>
<accession>P09649</accession>
<accession>Q6B0D9</accession>
<accession>Q6LDP5</accession>
<sequence>MTLGRRLACLFLACVLPALLLGGTALASEIVGGRRARPHAWPFMVSLQLRGGHFCGATLIAPNFVMSAAHCVANVNVRAVRVVLGAHNLSRREPTRQVFAVQRIFENGYDPVNLLNDIVILQLNGSATINANVQVAQLPAQGRRLGNGVQCLAMGWGLLGRNRGIASVLQELNVTVVTSLCRRSNVCTLVRGRQAGVCFGDSGSPLVCNGLIHGIASFVRGGCASGLYPDAFAPVAQFVNWIDSIIQRSEDNPCPHPRDPDPASRTH</sequence>
<protein>
    <recommendedName>
        <fullName>Neutrophil elastase</fullName>
        <ecNumber evidence="27">3.4.21.37</ecNumber>
    </recommendedName>
    <alternativeName>
        <fullName>Bone marrow serine protease</fullName>
    </alternativeName>
    <alternativeName>
        <fullName>Elastase-2</fullName>
    </alternativeName>
    <alternativeName>
        <fullName>Human leukocyte elastase</fullName>
        <shortName>HLE</shortName>
    </alternativeName>
    <alternativeName>
        <fullName>Medullasin</fullName>
    </alternativeName>
    <alternativeName>
        <fullName>PMN elastase</fullName>
    </alternativeName>
</protein>